<proteinExistence type="inferred from homology"/>
<evidence type="ECO:0000255" key="1">
    <source>
        <dbReference type="HAMAP-Rule" id="MF_01507"/>
    </source>
</evidence>
<comment type="similarity">
    <text evidence="1">Belongs to the UPF0297 family.</text>
</comment>
<accession>B5XJ02</accession>
<feature type="chain" id="PRO_1000198243" description="UPF0297 protein Spy49_1751c">
    <location>
        <begin position="1"/>
        <end position="89"/>
    </location>
</feature>
<dbReference type="EMBL" id="CP000829">
    <property type="protein sequence ID" value="ACI62001.1"/>
    <property type="molecule type" value="Genomic_DNA"/>
</dbReference>
<dbReference type="SMR" id="B5XJ02"/>
<dbReference type="KEGG" id="soz:Spy49_1751c"/>
<dbReference type="HOGENOM" id="CLU_162466_0_0_9"/>
<dbReference type="Proteomes" id="UP000001039">
    <property type="component" value="Chromosome"/>
</dbReference>
<dbReference type="HAMAP" id="MF_01507">
    <property type="entry name" value="UPF0297"/>
    <property type="match status" value="1"/>
</dbReference>
<dbReference type="InterPro" id="IPR009309">
    <property type="entry name" value="IreB"/>
</dbReference>
<dbReference type="NCBIfam" id="NF003997">
    <property type="entry name" value="PRK05473.1"/>
    <property type="match status" value="1"/>
</dbReference>
<dbReference type="PANTHER" id="PTHR40067">
    <property type="entry name" value="UPF0297 PROTEIN YRZL"/>
    <property type="match status" value="1"/>
</dbReference>
<dbReference type="PANTHER" id="PTHR40067:SF1">
    <property type="entry name" value="UPF0297 PROTEIN YRZL"/>
    <property type="match status" value="1"/>
</dbReference>
<dbReference type="Pfam" id="PF06135">
    <property type="entry name" value="IreB"/>
    <property type="match status" value="1"/>
</dbReference>
<dbReference type="PIRSF" id="PIRSF037258">
    <property type="entry name" value="DUF965_bac"/>
    <property type="match status" value="1"/>
</dbReference>
<protein>
    <recommendedName>
        <fullName evidence="1">UPF0297 protein Spy49_1751c</fullName>
    </recommendedName>
</protein>
<reference key="1">
    <citation type="journal article" date="2008" name="J. Bacteriol.">
        <title>Genome sequence of a nephritogenic and highly transformable M49 strain of Streptococcus pyogenes.</title>
        <authorList>
            <person name="McShan W.M."/>
            <person name="Ferretti J.J."/>
            <person name="Karasawa T."/>
            <person name="Suvorov A.N."/>
            <person name="Lin S."/>
            <person name="Qin B."/>
            <person name="Jia H."/>
            <person name="Kenton S."/>
            <person name="Najar F."/>
            <person name="Wu H."/>
            <person name="Scott J."/>
            <person name="Roe B.A."/>
            <person name="Savic D.J."/>
        </authorList>
    </citation>
    <scope>NUCLEOTIDE SEQUENCE [LARGE SCALE GENOMIC DNA]</scope>
    <source>
        <strain>NZ131</strain>
    </source>
</reference>
<organism>
    <name type="scientific">Streptococcus pyogenes serotype M49 (strain NZ131)</name>
    <dbReference type="NCBI Taxonomy" id="471876"/>
    <lineage>
        <taxon>Bacteria</taxon>
        <taxon>Bacillati</taxon>
        <taxon>Bacillota</taxon>
        <taxon>Bacilli</taxon>
        <taxon>Lactobacillales</taxon>
        <taxon>Streptococcaceae</taxon>
        <taxon>Streptococcus</taxon>
    </lineage>
</organism>
<sequence>MGFTDETVRFKLDDGDKRQISETLTAVYHSLDEKGYNPINQIVGYVLSGDPAYVPRYNDARNQIRKYERDEIVEELVRYYLQGNGIDVK</sequence>
<name>Y1751_STRPZ</name>
<gene>
    <name type="ordered locus">Spy49_1751c</name>
</gene>